<organism>
    <name type="scientific">Escherichia coli O8 (strain IAI1)</name>
    <dbReference type="NCBI Taxonomy" id="585034"/>
    <lineage>
        <taxon>Bacteria</taxon>
        <taxon>Pseudomonadati</taxon>
        <taxon>Pseudomonadota</taxon>
        <taxon>Gammaproteobacteria</taxon>
        <taxon>Enterobacterales</taxon>
        <taxon>Enterobacteriaceae</taxon>
        <taxon>Escherichia</taxon>
    </lineage>
</organism>
<reference key="1">
    <citation type="journal article" date="2009" name="PLoS Genet.">
        <title>Organised genome dynamics in the Escherichia coli species results in highly diverse adaptive paths.</title>
        <authorList>
            <person name="Touchon M."/>
            <person name="Hoede C."/>
            <person name="Tenaillon O."/>
            <person name="Barbe V."/>
            <person name="Baeriswyl S."/>
            <person name="Bidet P."/>
            <person name="Bingen E."/>
            <person name="Bonacorsi S."/>
            <person name="Bouchier C."/>
            <person name="Bouvet O."/>
            <person name="Calteau A."/>
            <person name="Chiapello H."/>
            <person name="Clermont O."/>
            <person name="Cruveiller S."/>
            <person name="Danchin A."/>
            <person name="Diard M."/>
            <person name="Dossat C."/>
            <person name="Karoui M.E."/>
            <person name="Frapy E."/>
            <person name="Garry L."/>
            <person name="Ghigo J.M."/>
            <person name="Gilles A.M."/>
            <person name="Johnson J."/>
            <person name="Le Bouguenec C."/>
            <person name="Lescat M."/>
            <person name="Mangenot S."/>
            <person name="Martinez-Jehanne V."/>
            <person name="Matic I."/>
            <person name="Nassif X."/>
            <person name="Oztas S."/>
            <person name="Petit M.A."/>
            <person name="Pichon C."/>
            <person name="Rouy Z."/>
            <person name="Ruf C.S."/>
            <person name="Schneider D."/>
            <person name="Tourret J."/>
            <person name="Vacherie B."/>
            <person name="Vallenet D."/>
            <person name="Medigue C."/>
            <person name="Rocha E.P.C."/>
            <person name="Denamur E."/>
        </authorList>
    </citation>
    <scope>NUCLEOTIDE SEQUENCE [LARGE SCALE GENOMIC DNA]</scope>
    <source>
        <strain>IAI1</strain>
    </source>
</reference>
<feature type="chain" id="PRO_1000126907" description="Large ribosomal subunit protein bL9">
    <location>
        <begin position="1"/>
        <end position="149"/>
    </location>
</feature>
<feature type="modified residue" description="N6-acetyllysine" evidence="1">
    <location>
        <position position="89"/>
    </location>
</feature>
<gene>
    <name evidence="1" type="primary">rplI</name>
    <name type="ordered locus">ECIAI1_4436</name>
</gene>
<comment type="function">
    <text evidence="1">Binds to the 23S rRNA.</text>
</comment>
<comment type="similarity">
    <text evidence="1">Belongs to the bacterial ribosomal protein bL9 family.</text>
</comment>
<name>RL9_ECO8A</name>
<accession>B7M9G5</accession>
<evidence type="ECO:0000255" key="1">
    <source>
        <dbReference type="HAMAP-Rule" id="MF_00503"/>
    </source>
</evidence>
<evidence type="ECO:0000305" key="2"/>
<dbReference type="EMBL" id="CU928160">
    <property type="protein sequence ID" value="CAR01178.1"/>
    <property type="molecule type" value="Genomic_DNA"/>
</dbReference>
<dbReference type="RefSeq" id="WP_001196062.1">
    <property type="nucleotide sequence ID" value="NC_011741.1"/>
</dbReference>
<dbReference type="SMR" id="B7M9G5"/>
<dbReference type="GeneID" id="93777620"/>
<dbReference type="KEGG" id="ecr:ECIAI1_4436"/>
<dbReference type="HOGENOM" id="CLU_078938_4_1_6"/>
<dbReference type="GO" id="GO:1990904">
    <property type="term" value="C:ribonucleoprotein complex"/>
    <property type="evidence" value="ECO:0007669"/>
    <property type="project" value="UniProtKB-KW"/>
</dbReference>
<dbReference type="GO" id="GO:0005840">
    <property type="term" value="C:ribosome"/>
    <property type="evidence" value="ECO:0007669"/>
    <property type="project" value="UniProtKB-KW"/>
</dbReference>
<dbReference type="GO" id="GO:0019843">
    <property type="term" value="F:rRNA binding"/>
    <property type="evidence" value="ECO:0007669"/>
    <property type="project" value="UniProtKB-UniRule"/>
</dbReference>
<dbReference type="GO" id="GO:0003735">
    <property type="term" value="F:structural constituent of ribosome"/>
    <property type="evidence" value="ECO:0007669"/>
    <property type="project" value="InterPro"/>
</dbReference>
<dbReference type="GO" id="GO:0006412">
    <property type="term" value="P:translation"/>
    <property type="evidence" value="ECO:0007669"/>
    <property type="project" value="UniProtKB-UniRule"/>
</dbReference>
<dbReference type="FunFam" id="3.10.430.100:FF:000001">
    <property type="entry name" value="50S ribosomal protein L9"/>
    <property type="match status" value="1"/>
</dbReference>
<dbReference type="FunFam" id="3.40.5.10:FF:000001">
    <property type="entry name" value="50S ribosomal protein L9"/>
    <property type="match status" value="1"/>
</dbReference>
<dbReference type="Gene3D" id="3.10.430.100">
    <property type="entry name" value="Ribosomal protein L9, C-terminal domain"/>
    <property type="match status" value="1"/>
</dbReference>
<dbReference type="Gene3D" id="3.40.5.10">
    <property type="entry name" value="Ribosomal protein L9, N-terminal domain"/>
    <property type="match status" value="1"/>
</dbReference>
<dbReference type="HAMAP" id="MF_00503">
    <property type="entry name" value="Ribosomal_bL9"/>
    <property type="match status" value="1"/>
</dbReference>
<dbReference type="InterPro" id="IPR000244">
    <property type="entry name" value="Ribosomal_bL9"/>
</dbReference>
<dbReference type="InterPro" id="IPR009027">
    <property type="entry name" value="Ribosomal_bL9/RNase_H1_N"/>
</dbReference>
<dbReference type="InterPro" id="IPR020594">
    <property type="entry name" value="Ribosomal_bL9_bac/chp"/>
</dbReference>
<dbReference type="InterPro" id="IPR020069">
    <property type="entry name" value="Ribosomal_bL9_C"/>
</dbReference>
<dbReference type="InterPro" id="IPR036791">
    <property type="entry name" value="Ribosomal_bL9_C_sf"/>
</dbReference>
<dbReference type="InterPro" id="IPR020070">
    <property type="entry name" value="Ribosomal_bL9_N"/>
</dbReference>
<dbReference type="InterPro" id="IPR036935">
    <property type="entry name" value="Ribosomal_bL9_N_sf"/>
</dbReference>
<dbReference type="NCBIfam" id="TIGR00158">
    <property type="entry name" value="L9"/>
    <property type="match status" value="1"/>
</dbReference>
<dbReference type="PANTHER" id="PTHR21368">
    <property type="entry name" value="50S RIBOSOMAL PROTEIN L9"/>
    <property type="match status" value="1"/>
</dbReference>
<dbReference type="Pfam" id="PF03948">
    <property type="entry name" value="Ribosomal_L9_C"/>
    <property type="match status" value="1"/>
</dbReference>
<dbReference type="Pfam" id="PF01281">
    <property type="entry name" value="Ribosomal_L9_N"/>
    <property type="match status" value="1"/>
</dbReference>
<dbReference type="SUPFAM" id="SSF55658">
    <property type="entry name" value="L9 N-domain-like"/>
    <property type="match status" value="1"/>
</dbReference>
<dbReference type="SUPFAM" id="SSF55653">
    <property type="entry name" value="Ribosomal protein L9 C-domain"/>
    <property type="match status" value="1"/>
</dbReference>
<dbReference type="PROSITE" id="PS00651">
    <property type="entry name" value="RIBOSOMAL_L9"/>
    <property type="match status" value="1"/>
</dbReference>
<sequence>MQVILLDKVANLGSLGDQVNVKAGYARNFLVPQGKAVPATKKNIEFFEARRAELEAKLAEVLAAANARAEKINALETVTIASKAGDEGKLFGSIGTRDIADAVTAAGVEVAKSEVRLPNGVLRTTGEHEVSFQVHSEVFAKVIVNVVAE</sequence>
<keyword id="KW-0007">Acetylation</keyword>
<keyword id="KW-0687">Ribonucleoprotein</keyword>
<keyword id="KW-0689">Ribosomal protein</keyword>
<keyword id="KW-0694">RNA-binding</keyword>
<keyword id="KW-0699">rRNA-binding</keyword>
<proteinExistence type="inferred from homology"/>
<protein>
    <recommendedName>
        <fullName evidence="1">Large ribosomal subunit protein bL9</fullName>
    </recommendedName>
    <alternativeName>
        <fullName evidence="2">50S ribosomal protein L9</fullName>
    </alternativeName>
</protein>